<proteinExistence type="inferred from homology"/>
<protein>
    <recommendedName>
        <fullName evidence="1">Chaperonin GroEL</fullName>
        <ecNumber evidence="1">5.6.1.7</ecNumber>
    </recommendedName>
    <alternativeName>
        <fullName evidence="1">60 kDa chaperonin</fullName>
    </alternativeName>
    <alternativeName>
        <fullName evidence="1">Chaperonin-60</fullName>
        <shortName evidence="1">Cpn60</shortName>
    </alternativeName>
</protein>
<evidence type="ECO:0000255" key="1">
    <source>
        <dbReference type="HAMAP-Rule" id="MF_00600"/>
    </source>
</evidence>
<feature type="chain" id="PRO_1000130042" description="Chaperonin GroEL">
    <location>
        <begin position="1"/>
        <end position="547"/>
    </location>
</feature>
<feature type="binding site" evidence="1">
    <location>
        <begin position="30"/>
        <end position="33"/>
    </location>
    <ligand>
        <name>ATP</name>
        <dbReference type="ChEBI" id="CHEBI:30616"/>
    </ligand>
</feature>
<feature type="binding site" evidence="1">
    <location>
        <position position="51"/>
    </location>
    <ligand>
        <name>ATP</name>
        <dbReference type="ChEBI" id="CHEBI:30616"/>
    </ligand>
</feature>
<feature type="binding site" evidence="1">
    <location>
        <begin position="87"/>
        <end position="91"/>
    </location>
    <ligand>
        <name>ATP</name>
        <dbReference type="ChEBI" id="CHEBI:30616"/>
    </ligand>
</feature>
<feature type="binding site" evidence="1">
    <location>
        <position position="415"/>
    </location>
    <ligand>
        <name>ATP</name>
        <dbReference type="ChEBI" id="CHEBI:30616"/>
    </ligand>
</feature>
<feature type="binding site" evidence="1">
    <location>
        <position position="496"/>
    </location>
    <ligand>
        <name>ATP</name>
        <dbReference type="ChEBI" id="CHEBI:30616"/>
    </ligand>
</feature>
<accession>B4SEN1</accession>
<keyword id="KW-0067">ATP-binding</keyword>
<keyword id="KW-0143">Chaperone</keyword>
<keyword id="KW-0963">Cytoplasm</keyword>
<keyword id="KW-0413">Isomerase</keyword>
<keyword id="KW-0547">Nucleotide-binding</keyword>
<keyword id="KW-1185">Reference proteome</keyword>
<sequence length="547" mass="58232">MTAKDILFDSDARAKLKVGVDKLANAVKVTLGPAGRNVLIDKKFGAPTSTKDGVTVAKEIELSDPFENMGAQMVREVASKTSDVAGDGTTTATVLAQAIYREGLKNVAAGARPIDLKRGIDRAVKEVVQELRNISRSISGKKEIAQVGTISANNDPVIGDLIADAMDKVGKDGVITVEEAKGMDTELKVVEGMQFDRGYLSPYFVTNSETMDAELEDPLILIYDKKISNMKELLPILEKSAQSGRPLLIISEDIEGEALATIVVNKLRGTLRVCAVKAPGFGDRRKAMLEDIAILTGGTVISEEKGYKLENATISYLGQAGRVTVDKDNTTIVEGKGGAEEIKARINEIKGQVEKSTSDYDTEKLQERLAKLSGGVAVLNIGASTEVEMKEKKARVEDALHATRAAVQEGIVVGGGVALIRAIKGLDRAIADNEDQKTGIEIIRRALEEPLRQIVANTGTTDGAVVLERVKAGTGDFGFNARTEQYENLVEAGVVDPTKVTRSALENAASVASILLTTEAAITDVKEEKSDMPAMPPGGMGGMGGMY</sequence>
<reference key="1">
    <citation type="submission" date="2008-06" db="EMBL/GenBank/DDBJ databases">
        <title>Complete sequence of Pelodictyon phaeoclathratiforme BU-1.</title>
        <authorList>
            <consortium name="US DOE Joint Genome Institute"/>
            <person name="Lucas S."/>
            <person name="Copeland A."/>
            <person name="Lapidus A."/>
            <person name="Glavina del Rio T."/>
            <person name="Dalin E."/>
            <person name="Tice H."/>
            <person name="Bruce D."/>
            <person name="Goodwin L."/>
            <person name="Pitluck S."/>
            <person name="Schmutz J."/>
            <person name="Larimer F."/>
            <person name="Land M."/>
            <person name="Hauser L."/>
            <person name="Kyrpides N."/>
            <person name="Mikhailova N."/>
            <person name="Liu Z."/>
            <person name="Li T."/>
            <person name="Zhao F."/>
            <person name="Overmann J."/>
            <person name="Bryant D.A."/>
            <person name="Richardson P."/>
        </authorList>
    </citation>
    <scope>NUCLEOTIDE SEQUENCE [LARGE SCALE GENOMIC DNA]</scope>
    <source>
        <strain>DSM 5477 / BU-1</strain>
    </source>
</reference>
<name>CH60_PELPB</name>
<comment type="function">
    <text evidence="1">Together with its co-chaperonin GroES, plays an essential role in assisting protein folding. The GroEL-GroES system forms a nano-cage that allows encapsulation of the non-native substrate proteins and provides a physical environment optimized to promote and accelerate protein folding.</text>
</comment>
<comment type="catalytic activity">
    <reaction evidence="1">
        <text>ATP + H2O + a folded polypeptide = ADP + phosphate + an unfolded polypeptide.</text>
        <dbReference type="EC" id="5.6.1.7"/>
    </reaction>
</comment>
<comment type="subunit">
    <text evidence="1">Forms a cylinder of 14 subunits composed of two heptameric rings stacked back-to-back. Interacts with the co-chaperonin GroES.</text>
</comment>
<comment type="subcellular location">
    <subcellularLocation>
        <location evidence="1">Cytoplasm</location>
    </subcellularLocation>
</comment>
<comment type="similarity">
    <text evidence="1">Belongs to the chaperonin (HSP60) family.</text>
</comment>
<gene>
    <name evidence="1" type="primary">groEL</name>
    <name evidence="1" type="synonym">groL</name>
    <name type="ordered locus">Ppha_0834</name>
</gene>
<organism>
    <name type="scientific">Pelodictyon phaeoclathratiforme (strain DSM 5477 / BU-1)</name>
    <dbReference type="NCBI Taxonomy" id="324925"/>
    <lineage>
        <taxon>Bacteria</taxon>
        <taxon>Pseudomonadati</taxon>
        <taxon>Chlorobiota</taxon>
        <taxon>Chlorobiia</taxon>
        <taxon>Chlorobiales</taxon>
        <taxon>Chlorobiaceae</taxon>
        <taxon>Chlorobium/Pelodictyon group</taxon>
        <taxon>Pelodictyon</taxon>
    </lineage>
</organism>
<dbReference type="EC" id="5.6.1.7" evidence="1"/>
<dbReference type="EMBL" id="CP001110">
    <property type="protein sequence ID" value="ACF43123.1"/>
    <property type="molecule type" value="Genomic_DNA"/>
</dbReference>
<dbReference type="RefSeq" id="WP_012507618.1">
    <property type="nucleotide sequence ID" value="NC_011060.1"/>
</dbReference>
<dbReference type="SMR" id="B4SEN1"/>
<dbReference type="STRING" id="324925.Ppha_0834"/>
<dbReference type="KEGG" id="pph:Ppha_0834"/>
<dbReference type="eggNOG" id="COG0459">
    <property type="taxonomic scope" value="Bacteria"/>
</dbReference>
<dbReference type="HOGENOM" id="CLU_016503_3_0_10"/>
<dbReference type="OrthoDB" id="9766614at2"/>
<dbReference type="Proteomes" id="UP000002724">
    <property type="component" value="Chromosome"/>
</dbReference>
<dbReference type="GO" id="GO:0005737">
    <property type="term" value="C:cytoplasm"/>
    <property type="evidence" value="ECO:0007669"/>
    <property type="project" value="UniProtKB-SubCell"/>
</dbReference>
<dbReference type="GO" id="GO:0005524">
    <property type="term" value="F:ATP binding"/>
    <property type="evidence" value="ECO:0007669"/>
    <property type="project" value="UniProtKB-UniRule"/>
</dbReference>
<dbReference type="GO" id="GO:0140662">
    <property type="term" value="F:ATP-dependent protein folding chaperone"/>
    <property type="evidence" value="ECO:0007669"/>
    <property type="project" value="InterPro"/>
</dbReference>
<dbReference type="GO" id="GO:0016853">
    <property type="term" value="F:isomerase activity"/>
    <property type="evidence" value="ECO:0007669"/>
    <property type="project" value="UniProtKB-KW"/>
</dbReference>
<dbReference type="GO" id="GO:0051082">
    <property type="term" value="F:unfolded protein binding"/>
    <property type="evidence" value="ECO:0007669"/>
    <property type="project" value="UniProtKB-UniRule"/>
</dbReference>
<dbReference type="GO" id="GO:0042026">
    <property type="term" value="P:protein refolding"/>
    <property type="evidence" value="ECO:0007669"/>
    <property type="project" value="UniProtKB-UniRule"/>
</dbReference>
<dbReference type="CDD" id="cd03344">
    <property type="entry name" value="GroEL"/>
    <property type="match status" value="1"/>
</dbReference>
<dbReference type="FunFam" id="3.50.7.10:FF:000001">
    <property type="entry name" value="60 kDa chaperonin"/>
    <property type="match status" value="1"/>
</dbReference>
<dbReference type="Gene3D" id="3.50.7.10">
    <property type="entry name" value="GroEL"/>
    <property type="match status" value="1"/>
</dbReference>
<dbReference type="Gene3D" id="1.10.560.10">
    <property type="entry name" value="GroEL-like equatorial domain"/>
    <property type="match status" value="1"/>
</dbReference>
<dbReference type="Gene3D" id="3.30.260.10">
    <property type="entry name" value="TCP-1-like chaperonin intermediate domain"/>
    <property type="match status" value="1"/>
</dbReference>
<dbReference type="HAMAP" id="MF_00600">
    <property type="entry name" value="CH60"/>
    <property type="match status" value="1"/>
</dbReference>
<dbReference type="InterPro" id="IPR018370">
    <property type="entry name" value="Chaperonin_Cpn60_CS"/>
</dbReference>
<dbReference type="InterPro" id="IPR001844">
    <property type="entry name" value="Cpn60/GroEL"/>
</dbReference>
<dbReference type="InterPro" id="IPR002423">
    <property type="entry name" value="Cpn60/GroEL/TCP-1"/>
</dbReference>
<dbReference type="InterPro" id="IPR027409">
    <property type="entry name" value="GroEL-like_apical_dom_sf"/>
</dbReference>
<dbReference type="InterPro" id="IPR027413">
    <property type="entry name" value="GROEL-like_equatorial_sf"/>
</dbReference>
<dbReference type="InterPro" id="IPR027410">
    <property type="entry name" value="TCP-1-like_intermed_sf"/>
</dbReference>
<dbReference type="NCBIfam" id="TIGR02348">
    <property type="entry name" value="GroEL"/>
    <property type="match status" value="1"/>
</dbReference>
<dbReference type="NCBIfam" id="NF000592">
    <property type="entry name" value="PRK00013.1"/>
    <property type="match status" value="1"/>
</dbReference>
<dbReference type="NCBIfam" id="NF009487">
    <property type="entry name" value="PRK12849.1"/>
    <property type="match status" value="1"/>
</dbReference>
<dbReference type="NCBIfam" id="NF009488">
    <property type="entry name" value="PRK12850.1"/>
    <property type="match status" value="1"/>
</dbReference>
<dbReference type="NCBIfam" id="NF009489">
    <property type="entry name" value="PRK12851.1"/>
    <property type="match status" value="1"/>
</dbReference>
<dbReference type="PANTHER" id="PTHR45633">
    <property type="entry name" value="60 KDA HEAT SHOCK PROTEIN, MITOCHONDRIAL"/>
    <property type="match status" value="1"/>
</dbReference>
<dbReference type="Pfam" id="PF00118">
    <property type="entry name" value="Cpn60_TCP1"/>
    <property type="match status" value="1"/>
</dbReference>
<dbReference type="PRINTS" id="PR00298">
    <property type="entry name" value="CHAPERONIN60"/>
</dbReference>
<dbReference type="SUPFAM" id="SSF52029">
    <property type="entry name" value="GroEL apical domain-like"/>
    <property type="match status" value="1"/>
</dbReference>
<dbReference type="SUPFAM" id="SSF48592">
    <property type="entry name" value="GroEL equatorial domain-like"/>
    <property type="match status" value="1"/>
</dbReference>
<dbReference type="SUPFAM" id="SSF54849">
    <property type="entry name" value="GroEL-intermediate domain like"/>
    <property type="match status" value="1"/>
</dbReference>
<dbReference type="PROSITE" id="PS00296">
    <property type="entry name" value="CHAPERONINS_CPN60"/>
    <property type="match status" value="1"/>
</dbReference>